<evidence type="ECO:0000255" key="1">
    <source>
        <dbReference type="HAMAP-Rule" id="MF_00125"/>
    </source>
</evidence>
<feature type="chain" id="PRO_1000117674" description="ATP phosphoribosyltransferase regulatory subunit">
    <location>
        <begin position="1"/>
        <end position="408"/>
    </location>
</feature>
<proteinExistence type="inferred from homology"/>
<sequence length="408" mass="45518">MIHQPPAGARDLLPLEVAQKGWINDCLQQVFQRWGYQRIVTSTIEWLDTLMAGGAIERSTVIQLQDTSEGTLGLRPELTASIARTAVSRMADSTYPQRICYRANVFRNPPPGYHGRQLEFYQAGVELLFAGGLLADGEILLLVADCLETLGLTDWHLILGEAGLTRSLLSVFPDPLRQQVRHCLAHLDYITLENLTYPSADLRERALLLFDLRGNPADVLSKVASLELEESDRIIVNNFKSLIHLIEQSHPNPLPLILDLSLVQTFDYYTGLVFKVVSSSDNQLRVLGQGGRYDQLLGLYHPQHQSAPGIGFSLNLEDLHLCLLSTSSSGMPRQIPVIDWLVIAQTTQSQVAAFNYAQLLRNSNTLVRVALDLGGRSPEEIRDYARTCRIKTLVWIGEDGTPRIETVQ</sequence>
<organism>
    <name type="scientific">Gloeothece citriformis (strain PCC 7424)</name>
    <name type="common">Cyanothece sp. (strain PCC 7424)</name>
    <dbReference type="NCBI Taxonomy" id="65393"/>
    <lineage>
        <taxon>Bacteria</taxon>
        <taxon>Bacillati</taxon>
        <taxon>Cyanobacteriota</taxon>
        <taxon>Cyanophyceae</taxon>
        <taxon>Oscillatoriophycideae</taxon>
        <taxon>Chroococcales</taxon>
        <taxon>Aphanothecaceae</taxon>
        <taxon>Gloeothece</taxon>
        <taxon>Gloeothece citriformis</taxon>
    </lineage>
</organism>
<keyword id="KW-0028">Amino-acid biosynthesis</keyword>
<keyword id="KW-0963">Cytoplasm</keyword>
<keyword id="KW-0368">Histidine biosynthesis</keyword>
<keyword id="KW-1185">Reference proteome</keyword>
<protein>
    <recommendedName>
        <fullName evidence="1">ATP phosphoribosyltransferase regulatory subunit</fullName>
    </recommendedName>
</protein>
<reference key="1">
    <citation type="journal article" date="2011" name="MBio">
        <title>Novel metabolic attributes of the genus Cyanothece, comprising a group of unicellular nitrogen-fixing Cyanobacteria.</title>
        <authorList>
            <person name="Bandyopadhyay A."/>
            <person name="Elvitigala T."/>
            <person name="Welsh E."/>
            <person name="Stockel J."/>
            <person name="Liberton M."/>
            <person name="Min H."/>
            <person name="Sherman L.A."/>
            <person name="Pakrasi H.B."/>
        </authorList>
    </citation>
    <scope>NUCLEOTIDE SEQUENCE [LARGE SCALE GENOMIC DNA]</scope>
    <source>
        <strain>PCC 7424</strain>
    </source>
</reference>
<accession>B7KDF3</accession>
<dbReference type="EMBL" id="CP001291">
    <property type="protein sequence ID" value="ACK68973.1"/>
    <property type="molecule type" value="Genomic_DNA"/>
</dbReference>
<dbReference type="RefSeq" id="WP_012597920.1">
    <property type="nucleotide sequence ID" value="NC_011729.1"/>
</dbReference>
<dbReference type="SMR" id="B7KDF3"/>
<dbReference type="STRING" id="65393.PCC7424_0509"/>
<dbReference type="KEGG" id="cyc:PCC7424_0509"/>
<dbReference type="eggNOG" id="COG3705">
    <property type="taxonomic scope" value="Bacteria"/>
</dbReference>
<dbReference type="HOGENOM" id="CLU_025113_0_2_3"/>
<dbReference type="OrthoDB" id="9800814at2"/>
<dbReference type="UniPathway" id="UPA00031">
    <property type="reaction ID" value="UER00006"/>
</dbReference>
<dbReference type="Proteomes" id="UP000002384">
    <property type="component" value="Chromosome"/>
</dbReference>
<dbReference type="GO" id="GO:0005737">
    <property type="term" value="C:cytoplasm"/>
    <property type="evidence" value="ECO:0007669"/>
    <property type="project" value="UniProtKB-SubCell"/>
</dbReference>
<dbReference type="GO" id="GO:0004821">
    <property type="term" value="F:histidine-tRNA ligase activity"/>
    <property type="evidence" value="ECO:0007669"/>
    <property type="project" value="TreeGrafter"/>
</dbReference>
<dbReference type="GO" id="GO:0006427">
    <property type="term" value="P:histidyl-tRNA aminoacylation"/>
    <property type="evidence" value="ECO:0007669"/>
    <property type="project" value="TreeGrafter"/>
</dbReference>
<dbReference type="GO" id="GO:0000105">
    <property type="term" value="P:L-histidine biosynthetic process"/>
    <property type="evidence" value="ECO:0007669"/>
    <property type="project" value="UniProtKB-UniRule"/>
</dbReference>
<dbReference type="CDD" id="cd00773">
    <property type="entry name" value="HisRS-like_core"/>
    <property type="match status" value="1"/>
</dbReference>
<dbReference type="Gene3D" id="3.30.930.10">
    <property type="entry name" value="Bira Bifunctional Protein, Domain 2"/>
    <property type="match status" value="1"/>
</dbReference>
<dbReference type="HAMAP" id="MF_00125">
    <property type="entry name" value="HisZ"/>
    <property type="match status" value="1"/>
</dbReference>
<dbReference type="InterPro" id="IPR045864">
    <property type="entry name" value="aa-tRNA-synth_II/BPL/LPL"/>
</dbReference>
<dbReference type="InterPro" id="IPR041715">
    <property type="entry name" value="HisRS-like_core"/>
</dbReference>
<dbReference type="InterPro" id="IPR004516">
    <property type="entry name" value="HisRS/HisZ"/>
</dbReference>
<dbReference type="InterPro" id="IPR004517">
    <property type="entry name" value="HisZ"/>
</dbReference>
<dbReference type="NCBIfam" id="TIGR00443">
    <property type="entry name" value="hisZ_biosyn_reg"/>
    <property type="match status" value="1"/>
</dbReference>
<dbReference type="NCBIfam" id="NF008940">
    <property type="entry name" value="PRK12292.2-3"/>
    <property type="match status" value="1"/>
</dbReference>
<dbReference type="PANTHER" id="PTHR43707:SF1">
    <property type="entry name" value="HISTIDINE--TRNA LIGASE, MITOCHONDRIAL-RELATED"/>
    <property type="match status" value="1"/>
</dbReference>
<dbReference type="PANTHER" id="PTHR43707">
    <property type="entry name" value="HISTIDYL-TRNA SYNTHETASE"/>
    <property type="match status" value="1"/>
</dbReference>
<dbReference type="Pfam" id="PF13393">
    <property type="entry name" value="tRNA-synt_His"/>
    <property type="match status" value="1"/>
</dbReference>
<dbReference type="PIRSF" id="PIRSF001549">
    <property type="entry name" value="His-tRNA_synth"/>
    <property type="match status" value="1"/>
</dbReference>
<dbReference type="SUPFAM" id="SSF55681">
    <property type="entry name" value="Class II aaRS and biotin synthetases"/>
    <property type="match status" value="1"/>
</dbReference>
<gene>
    <name evidence="1" type="primary">hisZ</name>
    <name type="ordered locus">PCC7424_0509</name>
</gene>
<comment type="function">
    <text evidence="1">Required for the first step of histidine biosynthesis. May allow the feedback regulation of ATP phosphoribosyltransferase activity by histidine.</text>
</comment>
<comment type="pathway">
    <text evidence="1">Amino-acid biosynthesis; L-histidine biosynthesis; L-histidine from 5-phospho-alpha-D-ribose 1-diphosphate: step 1/9.</text>
</comment>
<comment type="subunit">
    <text evidence="1">Heteromultimer composed of HisG and HisZ subunits.</text>
</comment>
<comment type="subcellular location">
    <subcellularLocation>
        <location evidence="1">Cytoplasm</location>
    </subcellularLocation>
</comment>
<comment type="miscellaneous">
    <text>This function is generally fulfilled by the C-terminal part of HisG, which is missing in some bacteria such as this one.</text>
</comment>
<comment type="similarity">
    <text evidence="1">Belongs to the class-II aminoacyl-tRNA synthetase family. HisZ subfamily.</text>
</comment>
<name>HISZ_GLOC7</name>